<organism>
    <name type="scientific">Homo sapiens</name>
    <name type="common">Human</name>
    <dbReference type="NCBI Taxonomy" id="9606"/>
    <lineage>
        <taxon>Eukaryota</taxon>
        <taxon>Metazoa</taxon>
        <taxon>Chordata</taxon>
        <taxon>Craniata</taxon>
        <taxon>Vertebrata</taxon>
        <taxon>Euteleostomi</taxon>
        <taxon>Mammalia</taxon>
        <taxon>Eutheria</taxon>
        <taxon>Euarchontoglires</taxon>
        <taxon>Primates</taxon>
        <taxon>Haplorrhini</taxon>
        <taxon>Catarrhini</taxon>
        <taxon>Hominidae</taxon>
        <taxon>Homo</taxon>
    </lineage>
</organism>
<comment type="alternative products">
    <event type="alternative splicing"/>
    <isoform>
        <id>A6NGG3-1</id>
        <name>1</name>
        <sequence type="displayed"/>
    </isoform>
    <isoform>
        <id>A6NGG3-2</id>
        <name>2</name>
        <sequence type="described" ref="VSP_030775"/>
    </isoform>
</comment>
<protein>
    <recommendedName>
        <fullName evidence="1">Putative uncharacterized protein encoded by LINC03041</fullName>
    </recommendedName>
    <alternativeName>
        <fullName evidence="2">Long intergenic non-protein coding RNA 3041</fullName>
    </alternativeName>
</protein>
<reference key="1">
    <citation type="journal article" date="2001" name="Nat. Biotechnol.">
        <title>Creation of genome-wide protein expression libraries using random activation of gene expression.</title>
        <authorList>
            <person name="Harrington J.J."/>
            <person name="Sherf B."/>
            <person name="Rundlett S."/>
            <person name="Jackson P.D."/>
            <person name="Perry R."/>
            <person name="Cain S."/>
            <person name="Leventhal C."/>
            <person name="Thornton M."/>
            <person name="Ramachandran R."/>
            <person name="Whittington J."/>
            <person name="Lerner L."/>
            <person name="Costanzo D."/>
            <person name="McElligott K."/>
            <person name="Boozer S."/>
            <person name="Mays R."/>
            <person name="Smith E."/>
            <person name="Veloso N."/>
            <person name="Klika A."/>
            <person name="Hess J."/>
            <person name="Cothren K."/>
            <person name="Lo K."/>
            <person name="Offenbacher J."/>
            <person name="Danzig J."/>
            <person name="Ducar M."/>
        </authorList>
    </citation>
    <scope>NUCLEOTIDE SEQUENCE [LARGE SCALE MRNA] (ISOFORM 1)</scope>
</reference>
<reference key="2">
    <citation type="journal article" date="2004" name="Nature">
        <title>DNA sequence and analysis of human chromosome 9.</title>
        <authorList>
            <person name="Humphray S.J."/>
            <person name="Oliver K."/>
            <person name="Hunt A.R."/>
            <person name="Plumb R.W."/>
            <person name="Loveland J.E."/>
            <person name="Howe K.L."/>
            <person name="Andrews T.D."/>
            <person name="Searle S."/>
            <person name="Hunt S.E."/>
            <person name="Scott C.E."/>
            <person name="Jones M.C."/>
            <person name="Ainscough R."/>
            <person name="Almeida J.P."/>
            <person name="Ambrose K.D."/>
            <person name="Ashwell R.I.S."/>
            <person name="Babbage A.K."/>
            <person name="Babbage S."/>
            <person name="Bagguley C.L."/>
            <person name="Bailey J."/>
            <person name="Banerjee R."/>
            <person name="Barker D.J."/>
            <person name="Barlow K.F."/>
            <person name="Bates K."/>
            <person name="Beasley H."/>
            <person name="Beasley O."/>
            <person name="Bird C.P."/>
            <person name="Bray-Allen S."/>
            <person name="Brown A.J."/>
            <person name="Brown J.Y."/>
            <person name="Burford D."/>
            <person name="Burrill W."/>
            <person name="Burton J."/>
            <person name="Carder C."/>
            <person name="Carter N.P."/>
            <person name="Chapman J.C."/>
            <person name="Chen Y."/>
            <person name="Clarke G."/>
            <person name="Clark S.Y."/>
            <person name="Clee C.M."/>
            <person name="Clegg S."/>
            <person name="Collier R.E."/>
            <person name="Corby N."/>
            <person name="Crosier M."/>
            <person name="Cummings A.T."/>
            <person name="Davies J."/>
            <person name="Dhami P."/>
            <person name="Dunn M."/>
            <person name="Dutta I."/>
            <person name="Dyer L.W."/>
            <person name="Earthrowl M.E."/>
            <person name="Faulkner L."/>
            <person name="Fleming C.J."/>
            <person name="Frankish A."/>
            <person name="Frankland J.A."/>
            <person name="French L."/>
            <person name="Fricker D.G."/>
            <person name="Garner P."/>
            <person name="Garnett J."/>
            <person name="Ghori J."/>
            <person name="Gilbert J.G.R."/>
            <person name="Glison C."/>
            <person name="Grafham D.V."/>
            <person name="Gribble S."/>
            <person name="Griffiths C."/>
            <person name="Griffiths-Jones S."/>
            <person name="Grocock R."/>
            <person name="Guy J."/>
            <person name="Hall R.E."/>
            <person name="Hammond S."/>
            <person name="Harley J.L."/>
            <person name="Harrison E.S.I."/>
            <person name="Hart E.A."/>
            <person name="Heath P.D."/>
            <person name="Henderson C.D."/>
            <person name="Hopkins B.L."/>
            <person name="Howard P.J."/>
            <person name="Howden P.J."/>
            <person name="Huckle E."/>
            <person name="Johnson C."/>
            <person name="Johnson D."/>
            <person name="Joy A.A."/>
            <person name="Kay M."/>
            <person name="Keenan S."/>
            <person name="Kershaw J.K."/>
            <person name="Kimberley A.M."/>
            <person name="King A."/>
            <person name="Knights A."/>
            <person name="Laird G.K."/>
            <person name="Langford C."/>
            <person name="Lawlor S."/>
            <person name="Leongamornlert D.A."/>
            <person name="Leversha M."/>
            <person name="Lloyd C."/>
            <person name="Lloyd D.M."/>
            <person name="Lovell J."/>
            <person name="Martin S."/>
            <person name="Mashreghi-Mohammadi M."/>
            <person name="Matthews L."/>
            <person name="McLaren S."/>
            <person name="McLay K.E."/>
            <person name="McMurray A."/>
            <person name="Milne S."/>
            <person name="Nickerson T."/>
            <person name="Nisbett J."/>
            <person name="Nordsiek G."/>
            <person name="Pearce A.V."/>
            <person name="Peck A.I."/>
            <person name="Porter K.M."/>
            <person name="Pandian R."/>
            <person name="Pelan S."/>
            <person name="Phillimore B."/>
            <person name="Povey S."/>
            <person name="Ramsey Y."/>
            <person name="Rand V."/>
            <person name="Scharfe M."/>
            <person name="Sehra H.K."/>
            <person name="Shownkeen R."/>
            <person name="Sims S.K."/>
            <person name="Skuce C.D."/>
            <person name="Smith M."/>
            <person name="Steward C.A."/>
            <person name="Swarbreck D."/>
            <person name="Sycamore N."/>
            <person name="Tester J."/>
            <person name="Thorpe A."/>
            <person name="Tracey A."/>
            <person name="Tromans A."/>
            <person name="Thomas D.W."/>
            <person name="Wall M."/>
            <person name="Wallis J.M."/>
            <person name="West A.P."/>
            <person name="Whitehead S.L."/>
            <person name="Willey D.L."/>
            <person name="Williams S.A."/>
            <person name="Wilming L."/>
            <person name="Wray P.W."/>
            <person name="Young L."/>
            <person name="Ashurst J.L."/>
            <person name="Coulson A."/>
            <person name="Blocker H."/>
            <person name="Durbin R.M."/>
            <person name="Sulston J.E."/>
            <person name="Hubbard T."/>
            <person name="Jackson M.J."/>
            <person name="Bentley D.R."/>
            <person name="Beck S."/>
            <person name="Rogers J."/>
            <person name="Dunham I."/>
        </authorList>
    </citation>
    <scope>NUCLEOTIDE SEQUENCE [LARGE SCALE GENOMIC DNA]</scope>
</reference>
<gene>
    <name evidence="2" type="primary">LINC03041</name>
    <name type="synonym">C9orf92</name>
</gene>
<feature type="chain" id="PRO_0000316783" description="Putative uncharacterized protein encoded by LINC03041">
    <location>
        <begin position="1"/>
        <end position="77"/>
    </location>
</feature>
<feature type="splice variant" id="VSP_030775" description="In isoform 2." evidence="1">
    <original>M</original>
    <variation>MELNTNIKSKKGLGRRNLKPMNGAWPPARREM</variation>
    <location>
        <position position="1"/>
    </location>
</feature>
<feature type="sequence conflict" description="In Ref. 1; BG220529." evidence="1" ref="1">
    <original>Q</original>
    <variation>R</variation>
    <location>
        <position position="27"/>
    </location>
</feature>
<feature type="sequence conflict" description="In Ref. 1; BG220529." evidence="1" ref="1">
    <original>S</original>
    <variation>P</variation>
    <location>
        <position position="72"/>
    </location>
</feature>
<proteinExistence type="predicted"/>
<keyword id="KW-0025">Alternative splicing</keyword>
<keyword id="KW-1185">Reference proteome</keyword>
<dbReference type="EMBL" id="BG220529">
    <property type="status" value="NOT_ANNOTATED_CDS"/>
    <property type="molecule type" value="mRNA"/>
</dbReference>
<dbReference type="EMBL" id="AL513424">
    <property type="status" value="NOT_ANNOTATED_CDS"/>
    <property type="molecule type" value="Genomic_DNA"/>
</dbReference>
<dbReference type="RefSeq" id="NP_001258758.1">
    <property type="nucleotide sequence ID" value="NM_001271829.1"/>
</dbReference>
<dbReference type="GlyGen" id="A6NGG3">
    <property type="glycosylation" value="1 site, 1 O-linked glycan (1 site)"/>
</dbReference>
<dbReference type="iPTMnet" id="A6NGG3"/>
<dbReference type="BioMuta" id="C9orf92"/>
<dbReference type="MassIVE" id="A6NGG3"/>
<dbReference type="PaxDb" id="9606-ENSP00000370058"/>
<dbReference type="ProteomicsDB" id="1123">
    <molecule id="A6NGG3-1"/>
</dbReference>
<dbReference type="ProteomicsDB" id="1124">
    <molecule id="A6NGG3-2"/>
</dbReference>
<dbReference type="DNASU" id="100129385"/>
<dbReference type="UCSC" id="uc031tcu.2">
    <molecule id="A6NGG3-1"/>
    <property type="organism name" value="human"/>
</dbReference>
<dbReference type="AGR" id="HGNC:19054"/>
<dbReference type="DisGeNET" id="100129385"/>
<dbReference type="GeneCards" id="LINC03041"/>
<dbReference type="HGNC" id="HGNC:19054">
    <property type="gene designation" value="LINC03041"/>
</dbReference>
<dbReference type="neXtProt" id="NX_A6NGG3"/>
<dbReference type="eggNOG" id="ENOG502TJYE">
    <property type="taxonomic scope" value="Eukaryota"/>
</dbReference>
<dbReference type="HOGENOM" id="CLU_176670_0_0_1"/>
<dbReference type="InParanoid" id="A6NGG3"/>
<dbReference type="PAN-GO" id="A6NGG3">
    <property type="GO annotations" value="0 GO annotations based on evolutionary models"/>
</dbReference>
<dbReference type="TreeFam" id="TF354093"/>
<dbReference type="PathwayCommons" id="A6NGG3"/>
<dbReference type="BioGRID-ORCS" id="100129385">
    <property type="hits" value="7 hits in 1083 CRISPR screens"/>
</dbReference>
<dbReference type="ChiTaRS" id="C9orf92">
    <property type="organism name" value="human"/>
</dbReference>
<dbReference type="Pharos" id="A6NGG3">
    <property type="development level" value="Tdark"/>
</dbReference>
<dbReference type="PRO" id="PR:A6NGG3"/>
<dbReference type="Proteomes" id="UP000005640">
    <property type="component" value="Chromosome 9"/>
</dbReference>
<dbReference type="RNAct" id="A6NGG3">
    <property type="molecule type" value="protein"/>
</dbReference>
<dbReference type="InterPro" id="IPR040507">
    <property type="entry name" value="DUF5540"/>
</dbReference>
<dbReference type="Pfam" id="PF17694">
    <property type="entry name" value="DUF5540"/>
    <property type="match status" value="1"/>
</dbReference>
<accession>A6NGG3</accession>
<accession>A6NMF8</accession>
<evidence type="ECO:0000305" key="1"/>
<evidence type="ECO:0000312" key="2">
    <source>
        <dbReference type="HGNC" id="HGNC:19054"/>
    </source>
</evidence>
<name>CI092_HUMAN</name>
<sequence>MARFQRTKEREEDRCSLNIYYVRNTTQGTAPACVGKRMQPSPTGKGGKCCTVHGLTRKIHNVQPNLQSPILSAACVD</sequence>